<proteinExistence type="inferred from homology"/>
<name>ISPD_XANOR</name>
<accession>Q5GYK6</accession>
<sequence>MTGSIWAGSIWAIVPAAGRGTRFGGPLPKQYLQAGGQPLMAYTLMALAAHPALAGIVVAIAPDDADWPGWTAVQSKPVLTCLGGATRAASVLAGVLALPESVRADDFVLVHDAARPNLALADLDRLLEIGRGDPVGAILAAPVRDTLKRAGDDGGIDGTEPRERLWRALTPQLFRRHQLIRGLTEASAAGVDVTDEAMAMERMGLRPLLVEGAEDNFKVTTPADLARFEFELARRGIAVDADALEAPAVNAQSNARNVATQLATVSYGNDAT</sequence>
<organism>
    <name type="scientific">Xanthomonas oryzae pv. oryzae (strain KACC10331 / KXO85)</name>
    <dbReference type="NCBI Taxonomy" id="291331"/>
    <lineage>
        <taxon>Bacteria</taxon>
        <taxon>Pseudomonadati</taxon>
        <taxon>Pseudomonadota</taxon>
        <taxon>Gammaproteobacteria</taxon>
        <taxon>Lysobacterales</taxon>
        <taxon>Lysobacteraceae</taxon>
        <taxon>Xanthomonas</taxon>
    </lineage>
</organism>
<dbReference type="EC" id="2.7.7.60" evidence="1"/>
<dbReference type="EMBL" id="AE013598">
    <property type="protein sequence ID" value="AAW76215.1"/>
    <property type="molecule type" value="Genomic_DNA"/>
</dbReference>
<dbReference type="SMR" id="Q5GYK6"/>
<dbReference type="STRING" id="291331.XOO2961"/>
<dbReference type="KEGG" id="xoo:XOO2961"/>
<dbReference type="HOGENOM" id="CLU_061281_3_1_6"/>
<dbReference type="UniPathway" id="UPA00056">
    <property type="reaction ID" value="UER00093"/>
</dbReference>
<dbReference type="Proteomes" id="UP000006735">
    <property type="component" value="Chromosome"/>
</dbReference>
<dbReference type="GO" id="GO:0050518">
    <property type="term" value="F:2-C-methyl-D-erythritol 4-phosphate cytidylyltransferase activity"/>
    <property type="evidence" value="ECO:0007669"/>
    <property type="project" value="UniProtKB-UniRule"/>
</dbReference>
<dbReference type="GO" id="GO:0019288">
    <property type="term" value="P:isopentenyl diphosphate biosynthetic process, methylerythritol 4-phosphate pathway"/>
    <property type="evidence" value="ECO:0007669"/>
    <property type="project" value="UniProtKB-UniRule"/>
</dbReference>
<dbReference type="CDD" id="cd02516">
    <property type="entry name" value="CDP-ME_synthetase"/>
    <property type="match status" value="1"/>
</dbReference>
<dbReference type="FunFam" id="3.90.550.10:FF:000003">
    <property type="entry name" value="2-C-methyl-D-erythritol 4-phosphate cytidylyltransferase"/>
    <property type="match status" value="1"/>
</dbReference>
<dbReference type="Gene3D" id="3.90.550.10">
    <property type="entry name" value="Spore Coat Polysaccharide Biosynthesis Protein SpsA, Chain A"/>
    <property type="match status" value="1"/>
</dbReference>
<dbReference type="HAMAP" id="MF_00108">
    <property type="entry name" value="IspD"/>
    <property type="match status" value="1"/>
</dbReference>
<dbReference type="InterPro" id="IPR001228">
    <property type="entry name" value="IspD"/>
</dbReference>
<dbReference type="InterPro" id="IPR034683">
    <property type="entry name" value="IspD/TarI"/>
</dbReference>
<dbReference type="InterPro" id="IPR050088">
    <property type="entry name" value="IspD/TarI_cytidylyltransf_bact"/>
</dbReference>
<dbReference type="InterPro" id="IPR018294">
    <property type="entry name" value="ISPD_synthase_CS"/>
</dbReference>
<dbReference type="InterPro" id="IPR029044">
    <property type="entry name" value="Nucleotide-diphossugar_trans"/>
</dbReference>
<dbReference type="NCBIfam" id="TIGR00453">
    <property type="entry name" value="ispD"/>
    <property type="match status" value="1"/>
</dbReference>
<dbReference type="PANTHER" id="PTHR32125">
    <property type="entry name" value="2-C-METHYL-D-ERYTHRITOL 4-PHOSPHATE CYTIDYLYLTRANSFERASE, CHLOROPLASTIC"/>
    <property type="match status" value="1"/>
</dbReference>
<dbReference type="PANTHER" id="PTHR32125:SF4">
    <property type="entry name" value="2-C-METHYL-D-ERYTHRITOL 4-PHOSPHATE CYTIDYLYLTRANSFERASE, CHLOROPLASTIC"/>
    <property type="match status" value="1"/>
</dbReference>
<dbReference type="Pfam" id="PF01128">
    <property type="entry name" value="IspD"/>
    <property type="match status" value="1"/>
</dbReference>
<dbReference type="SUPFAM" id="SSF53448">
    <property type="entry name" value="Nucleotide-diphospho-sugar transferases"/>
    <property type="match status" value="1"/>
</dbReference>
<dbReference type="PROSITE" id="PS01295">
    <property type="entry name" value="ISPD"/>
    <property type="match status" value="1"/>
</dbReference>
<reference key="1">
    <citation type="journal article" date="2005" name="Nucleic Acids Res.">
        <title>The genome sequence of Xanthomonas oryzae pathovar oryzae KACC10331, the bacterial blight pathogen of rice.</title>
        <authorList>
            <person name="Lee B.-M."/>
            <person name="Park Y.-J."/>
            <person name="Park D.-S."/>
            <person name="Kang H.-W."/>
            <person name="Kim J.-G."/>
            <person name="Song E.-S."/>
            <person name="Park I.-C."/>
            <person name="Yoon U.-H."/>
            <person name="Hahn J.-H."/>
            <person name="Koo B.-S."/>
            <person name="Lee G.-B."/>
            <person name="Kim H."/>
            <person name="Park H.-S."/>
            <person name="Yoon K.-O."/>
            <person name="Kim J.-H."/>
            <person name="Jung C.-H."/>
            <person name="Koh N.-H."/>
            <person name="Seo J.-S."/>
            <person name="Go S.-J."/>
        </authorList>
    </citation>
    <scope>NUCLEOTIDE SEQUENCE [LARGE SCALE GENOMIC DNA]</scope>
    <source>
        <strain>KACC10331 / KXO85</strain>
    </source>
</reference>
<keyword id="KW-0414">Isoprene biosynthesis</keyword>
<keyword id="KW-0548">Nucleotidyltransferase</keyword>
<keyword id="KW-1185">Reference proteome</keyword>
<keyword id="KW-0808">Transferase</keyword>
<protein>
    <recommendedName>
        <fullName evidence="1">2-C-methyl-D-erythritol 4-phosphate cytidylyltransferase</fullName>
        <ecNumber evidence="1">2.7.7.60</ecNumber>
    </recommendedName>
    <alternativeName>
        <fullName evidence="1">4-diphosphocytidyl-2C-methyl-D-erythritol synthase</fullName>
    </alternativeName>
    <alternativeName>
        <fullName evidence="1">MEP cytidylyltransferase</fullName>
        <shortName evidence="1">MCT</shortName>
    </alternativeName>
</protein>
<gene>
    <name evidence="1" type="primary">ispD</name>
    <name type="ordered locus">XOO2961</name>
</gene>
<feature type="chain" id="PRO_0000237837" description="2-C-methyl-D-erythritol 4-phosphate cytidylyltransferase">
    <location>
        <begin position="1"/>
        <end position="272"/>
    </location>
</feature>
<feature type="site" description="Transition state stabilizer" evidence="1">
    <location>
        <position position="22"/>
    </location>
</feature>
<feature type="site" description="Transition state stabilizer" evidence="1">
    <location>
        <position position="29"/>
    </location>
</feature>
<feature type="site" description="Positions MEP for the nucleophilic attack" evidence="1">
    <location>
        <position position="162"/>
    </location>
</feature>
<feature type="site" description="Positions MEP for the nucleophilic attack" evidence="1">
    <location>
        <position position="218"/>
    </location>
</feature>
<comment type="function">
    <text evidence="1">Catalyzes the formation of 4-diphosphocytidyl-2-C-methyl-D-erythritol from CTP and 2-C-methyl-D-erythritol 4-phosphate (MEP).</text>
</comment>
<comment type="catalytic activity">
    <reaction evidence="1">
        <text>2-C-methyl-D-erythritol 4-phosphate + CTP + H(+) = 4-CDP-2-C-methyl-D-erythritol + diphosphate</text>
        <dbReference type="Rhea" id="RHEA:13429"/>
        <dbReference type="ChEBI" id="CHEBI:15378"/>
        <dbReference type="ChEBI" id="CHEBI:33019"/>
        <dbReference type="ChEBI" id="CHEBI:37563"/>
        <dbReference type="ChEBI" id="CHEBI:57823"/>
        <dbReference type="ChEBI" id="CHEBI:58262"/>
        <dbReference type="EC" id="2.7.7.60"/>
    </reaction>
</comment>
<comment type="pathway">
    <text evidence="1">Isoprenoid biosynthesis; isopentenyl diphosphate biosynthesis via DXP pathway; isopentenyl diphosphate from 1-deoxy-D-xylulose 5-phosphate: step 2/6.</text>
</comment>
<comment type="similarity">
    <text evidence="1">Belongs to the IspD/TarI cytidylyltransferase family. IspD subfamily.</text>
</comment>
<evidence type="ECO:0000255" key="1">
    <source>
        <dbReference type="HAMAP-Rule" id="MF_00108"/>
    </source>
</evidence>